<name>RLMKL_SALAR</name>
<gene>
    <name evidence="1" type="primary">rlmL</name>
    <name type="ordered locus">SARI_01948</name>
</gene>
<dbReference type="EC" id="2.1.1.173" evidence="1"/>
<dbReference type="EC" id="2.1.1.264" evidence="1"/>
<dbReference type="EMBL" id="CP000880">
    <property type="protein sequence ID" value="ABX21830.1"/>
    <property type="molecule type" value="Genomic_DNA"/>
</dbReference>
<dbReference type="SMR" id="A9MHU0"/>
<dbReference type="STRING" id="41514.SARI_01948"/>
<dbReference type="KEGG" id="ses:SARI_01948"/>
<dbReference type="HOGENOM" id="CLU_014042_2_0_6"/>
<dbReference type="Proteomes" id="UP000002084">
    <property type="component" value="Chromosome"/>
</dbReference>
<dbReference type="GO" id="GO:0005737">
    <property type="term" value="C:cytoplasm"/>
    <property type="evidence" value="ECO:0007669"/>
    <property type="project" value="UniProtKB-SubCell"/>
</dbReference>
<dbReference type="GO" id="GO:0052915">
    <property type="term" value="F:23S rRNA (guanine(2445)-N(2))-methyltransferase activity"/>
    <property type="evidence" value="ECO:0007669"/>
    <property type="project" value="UniProtKB-UniRule"/>
</dbReference>
<dbReference type="GO" id="GO:0003723">
    <property type="term" value="F:RNA binding"/>
    <property type="evidence" value="ECO:0007669"/>
    <property type="project" value="UniProtKB-KW"/>
</dbReference>
<dbReference type="GO" id="GO:0070043">
    <property type="term" value="F:rRNA (guanine-N7-)-methyltransferase activity"/>
    <property type="evidence" value="ECO:0007669"/>
    <property type="project" value="UniProtKB-UniRule"/>
</dbReference>
<dbReference type="CDD" id="cd02440">
    <property type="entry name" value="AdoMet_MTases"/>
    <property type="match status" value="2"/>
</dbReference>
<dbReference type="CDD" id="cd11715">
    <property type="entry name" value="THUMP_AdoMetMT"/>
    <property type="match status" value="1"/>
</dbReference>
<dbReference type="FunFam" id="3.30.750.80:FF:000001">
    <property type="entry name" value="Ribosomal RNA large subunit methyltransferase K/L"/>
    <property type="match status" value="1"/>
</dbReference>
<dbReference type="FunFam" id="3.40.50.150:FF:000039">
    <property type="entry name" value="Ribosomal RNA large subunit methyltransferase K/L"/>
    <property type="match status" value="1"/>
</dbReference>
<dbReference type="Gene3D" id="3.30.2130.30">
    <property type="match status" value="1"/>
</dbReference>
<dbReference type="Gene3D" id="3.30.750.80">
    <property type="entry name" value="RNA methyltransferase domain (HRMD) like"/>
    <property type="match status" value="1"/>
</dbReference>
<dbReference type="Gene3D" id="3.40.50.150">
    <property type="entry name" value="Vaccinia Virus protein VP39"/>
    <property type="match status" value="2"/>
</dbReference>
<dbReference type="HAMAP" id="MF_01858">
    <property type="entry name" value="23SrRNA_methyltr_KL"/>
    <property type="match status" value="1"/>
</dbReference>
<dbReference type="InterPro" id="IPR017244">
    <property type="entry name" value="23SrRNA_methyltr_KL"/>
</dbReference>
<dbReference type="InterPro" id="IPR002052">
    <property type="entry name" value="DNA_methylase_N6_adenine_CS"/>
</dbReference>
<dbReference type="InterPro" id="IPR000241">
    <property type="entry name" value="RlmKL-like_Mtase"/>
</dbReference>
<dbReference type="InterPro" id="IPR053943">
    <property type="entry name" value="RlmKL-like_Mtase_CS"/>
</dbReference>
<dbReference type="InterPro" id="IPR054170">
    <property type="entry name" value="RlmL_1st"/>
</dbReference>
<dbReference type="InterPro" id="IPR019614">
    <property type="entry name" value="SAM-dep_methyl-trfase"/>
</dbReference>
<dbReference type="InterPro" id="IPR029063">
    <property type="entry name" value="SAM-dependent_MTases_sf"/>
</dbReference>
<dbReference type="InterPro" id="IPR004114">
    <property type="entry name" value="THUMP_dom"/>
</dbReference>
<dbReference type="NCBIfam" id="NF008748">
    <property type="entry name" value="PRK11783.1"/>
    <property type="match status" value="1"/>
</dbReference>
<dbReference type="PANTHER" id="PTHR47313">
    <property type="entry name" value="RIBOSOMAL RNA LARGE SUBUNIT METHYLTRANSFERASE K/L"/>
    <property type="match status" value="1"/>
</dbReference>
<dbReference type="PANTHER" id="PTHR47313:SF1">
    <property type="entry name" value="RIBOSOMAL RNA LARGE SUBUNIT METHYLTRANSFERASE K_L"/>
    <property type="match status" value="1"/>
</dbReference>
<dbReference type="Pfam" id="PF10672">
    <property type="entry name" value="Methyltrans_SAM"/>
    <property type="match status" value="1"/>
</dbReference>
<dbReference type="Pfam" id="PF22020">
    <property type="entry name" value="RlmL_1st"/>
    <property type="match status" value="1"/>
</dbReference>
<dbReference type="Pfam" id="PF02926">
    <property type="entry name" value="THUMP"/>
    <property type="match status" value="1"/>
</dbReference>
<dbReference type="Pfam" id="PF01170">
    <property type="entry name" value="UPF0020"/>
    <property type="match status" value="1"/>
</dbReference>
<dbReference type="PIRSF" id="PIRSF037618">
    <property type="entry name" value="RNA_Mtase_bacteria_prd"/>
    <property type="match status" value="1"/>
</dbReference>
<dbReference type="PRINTS" id="PR00507">
    <property type="entry name" value="N12N6MTFRASE"/>
</dbReference>
<dbReference type="SMART" id="SM00981">
    <property type="entry name" value="THUMP"/>
    <property type="match status" value="1"/>
</dbReference>
<dbReference type="SUPFAM" id="SSF53335">
    <property type="entry name" value="S-adenosyl-L-methionine-dependent methyltransferases"/>
    <property type="match status" value="2"/>
</dbReference>
<dbReference type="PROSITE" id="PS51165">
    <property type="entry name" value="THUMP"/>
    <property type="match status" value="1"/>
</dbReference>
<dbReference type="PROSITE" id="PS01261">
    <property type="entry name" value="UPF0020"/>
    <property type="match status" value="1"/>
</dbReference>
<comment type="function">
    <text evidence="1">Specifically methylates the guanine in position 2445 (m2G2445) and the guanine in position 2069 (m7G2069) of 23S rRNA.</text>
</comment>
<comment type="catalytic activity">
    <reaction evidence="1">
        <text>guanosine(2445) in 23S rRNA + S-adenosyl-L-methionine = N(2)-methylguanosine(2445) in 23S rRNA + S-adenosyl-L-homocysteine + H(+)</text>
        <dbReference type="Rhea" id="RHEA:42740"/>
        <dbReference type="Rhea" id="RHEA-COMP:10215"/>
        <dbReference type="Rhea" id="RHEA-COMP:10216"/>
        <dbReference type="ChEBI" id="CHEBI:15378"/>
        <dbReference type="ChEBI" id="CHEBI:57856"/>
        <dbReference type="ChEBI" id="CHEBI:59789"/>
        <dbReference type="ChEBI" id="CHEBI:74269"/>
        <dbReference type="ChEBI" id="CHEBI:74481"/>
        <dbReference type="EC" id="2.1.1.173"/>
    </reaction>
</comment>
<comment type="catalytic activity">
    <reaction evidence="1">
        <text>guanosine(2069) in 23S rRNA + S-adenosyl-L-methionine = N(2)-methylguanosine(2069) in 23S rRNA + S-adenosyl-L-homocysteine + H(+)</text>
        <dbReference type="Rhea" id="RHEA:43772"/>
        <dbReference type="Rhea" id="RHEA-COMP:10688"/>
        <dbReference type="Rhea" id="RHEA-COMP:10689"/>
        <dbReference type="ChEBI" id="CHEBI:15378"/>
        <dbReference type="ChEBI" id="CHEBI:57856"/>
        <dbReference type="ChEBI" id="CHEBI:59789"/>
        <dbReference type="ChEBI" id="CHEBI:74269"/>
        <dbReference type="ChEBI" id="CHEBI:74481"/>
        <dbReference type="EC" id="2.1.1.264"/>
    </reaction>
</comment>
<comment type="subcellular location">
    <subcellularLocation>
        <location evidence="1">Cytoplasm</location>
    </subcellularLocation>
</comment>
<comment type="similarity">
    <text evidence="1">Belongs to the methyltransferase superfamily. RlmKL family.</text>
</comment>
<proteinExistence type="inferred from homology"/>
<protein>
    <recommendedName>
        <fullName evidence="1">Ribosomal RNA large subunit methyltransferase K/L</fullName>
    </recommendedName>
    <domain>
        <recommendedName>
            <fullName evidence="1">23S rRNA m2G2445 methyltransferase</fullName>
            <ecNumber evidence="1">2.1.1.173</ecNumber>
        </recommendedName>
        <alternativeName>
            <fullName evidence="1">rRNA (guanine-N(2)-)-methyltransferase RlmL</fullName>
        </alternativeName>
    </domain>
    <domain>
        <recommendedName>
            <fullName evidence="1">23S rRNA m7G2069 methyltransferase</fullName>
            <ecNumber evidence="1">2.1.1.264</ecNumber>
        </recommendedName>
        <alternativeName>
            <fullName evidence="1">rRNA (guanine-N(7)-)-methyltransferase RlmK</fullName>
        </alternativeName>
    </domain>
</protein>
<organism>
    <name type="scientific">Salmonella arizonae (strain ATCC BAA-731 / CDC346-86 / RSK2980)</name>
    <dbReference type="NCBI Taxonomy" id="41514"/>
    <lineage>
        <taxon>Bacteria</taxon>
        <taxon>Pseudomonadati</taxon>
        <taxon>Pseudomonadota</taxon>
        <taxon>Gammaproteobacteria</taxon>
        <taxon>Enterobacterales</taxon>
        <taxon>Enterobacteriaceae</taxon>
        <taxon>Salmonella</taxon>
    </lineage>
</organism>
<sequence length="702" mass="78792">MNSLFASTARGLEELLKTELEKLGAVECQVVQGGVHFQGDTRLIYQSLMWSRLASRIILPMGECKVYSDLDLYLGVQAINWTEIFNPGATFAVHFSGLNDTIRNSQYGAMKVKDAIVDAFTRKNLPRPNVDRESPDLRINVWLNKETASIALDLSGDGLHLRGYRDRAGLAPIKETLAAAIVMRSGWQPGTPLLDPMCGSGTLLIEAAMWATDRAPGLHRGHWGFSGWAQHDETIWQEVKAEAQTRARKGLAEYSSHFYGSDSDARVIERARSNARRAGIGELITFEVKDVAQLSNPLPKGPYGTVISNPPYGERLDSEPALIALHSLLGRIMKNQFGGWNLSLFSASPDLLGSLQLRADKQFKAKNGPLDCVQKNYHIAETTADSKPATVAEDYANRLRKNLKKLEKWARQEGIECYRLYDADLPEYNVAVDRYGDWAVIQEYAPPKTVDAQKARQRLFDIIAATLSVLGIPPNKLVLKTRERQKGKNQYQKMSEKGEFLEVSEYNARLWVNLTDYLDTGLFLDHRIARRMLGEMSQGKDFLNLFSYTGSASVHAGLGGARSTTTVDMSRTYLEWAERNLRLNGLSGRAHRLIQADCLGWLREANEQFDLIFIDPPTFSNSKRMEASFDVQRDHVALMKDLKRLLRKGGTIMFSNNKRGFRMDLEGLAELGLTAQEITQKTLSPDFARNRQIHNCWLICAA</sequence>
<reference key="1">
    <citation type="submission" date="2007-11" db="EMBL/GenBank/DDBJ databases">
        <authorList>
            <consortium name="The Salmonella enterica serovar Arizonae Genome Sequencing Project"/>
            <person name="McClelland M."/>
            <person name="Sanderson E.K."/>
            <person name="Porwollik S."/>
            <person name="Spieth J."/>
            <person name="Clifton W.S."/>
            <person name="Fulton R."/>
            <person name="Chunyan W."/>
            <person name="Wollam A."/>
            <person name="Shah N."/>
            <person name="Pepin K."/>
            <person name="Bhonagiri V."/>
            <person name="Nash W."/>
            <person name="Johnson M."/>
            <person name="Thiruvilangam P."/>
            <person name="Wilson R."/>
        </authorList>
    </citation>
    <scope>NUCLEOTIDE SEQUENCE [LARGE SCALE GENOMIC DNA]</scope>
    <source>
        <strain>ATCC BAA-731 / CDC346-86 / RSK2980</strain>
    </source>
</reference>
<keyword id="KW-0963">Cytoplasm</keyword>
<keyword id="KW-0489">Methyltransferase</keyword>
<keyword id="KW-1185">Reference proteome</keyword>
<keyword id="KW-0694">RNA-binding</keyword>
<keyword id="KW-0698">rRNA processing</keyword>
<keyword id="KW-0949">S-adenosyl-L-methionine</keyword>
<keyword id="KW-0808">Transferase</keyword>
<accession>A9MHU0</accession>
<evidence type="ECO:0000255" key="1">
    <source>
        <dbReference type="HAMAP-Rule" id="MF_01858"/>
    </source>
</evidence>
<feature type="chain" id="PRO_0000366805" description="Ribosomal RNA large subunit methyltransferase K/L">
    <location>
        <begin position="1"/>
        <end position="702"/>
    </location>
</feature>
<feature type="domain" description="THUMP" evidence="1">
    <location>
        <begin position="43"/>
        <end position="154"/>
    </location>
</feature>